<accession>C6DI77</accession>
<dbReference type="EC" id="2.1.1.163" evidence="1"/>
<dbReference type="EC" id="2.1.1.201" evidence="1"/>
<dbReference type="EMBL" id="CP001657">
    <property type="protein sequence ID" value="ACT15071.1"/>
    <property type="molecule type" value="Genomic_DNA"/>
</dbReference>
<dbReference type="RefSeq" id="WP_015842148.1">
    <property type="nucleotide sequence ID" value="NC_012917.1"/>
</dbReference>
<dbReference type="SMR" id="C6DI77"/>
<dbReference type="STRING" id="561230.PC1_4056"/>
<dbReference type="GeneID" id="67796035"/>
<dbReference type="KEGG" id="pct:PC1_4056"/>
<dbReference type="eggNOG" id="COG2226">
    <property type="taxonomic scope" value="Bacteria"/>
</dbReference>
<dbReference type="HOGENOM" id="CLU_037990_0_0_6"/>
<dbReference type="OrthoDB" id="9808140at2"/>
<dbReference type="UniPathway" id="UPA00079">
    <property type="reaction ID" value="UER00169"/>
</dbReference>
<dbReference type="UniPathway" id="UPA00232"/>
<dbReference type="Proteomes" id="UP000002736">
    <property type="component" value="Chromosome"/>
</dbReference>
<dbReference type="GO" id="GO:0008425">
    <property type="term" value="F:2-methoxy-6-polyprenyl-1,4-benzoquinol methyltransferase activity"/>
    <property type="evidence" value="ECO:0007669"/>
    <property type="project" value="UniProtKB-UniRule"/>
</dbReference>
<dbReference type="GO" id="GO:0043770">
    <property type="term" value="F:demethylmenaquinone methyltransferase activity"/>
    <property type="evidence" value="ECO:0007669"/>
    <property type="project" value="UniProtKB-UniRule"/>
</dbReference>
<dbReference type="GO" id="GO:0009060">
    <property type="term" value="P:aerobic respiration"/>
    <property type="evidence" value="ECO:0007669"/>
    <property type="project" value="UniProtKB-UniRule"/>
</dbReference>
<dbReference type="GO" id="GO:0009234">
    <property type="term" value="P:menaquinone biosynthetic process"/>
    <property type="evidence" value="ECO:0007669"/>
    <property type="project" value="UniProtKB-UniRule"/>
</dbReference>
<dbReference type="GO" id="GO:0032259">
    <property type="term" value="P:methylation"/>
    <property type="evidence" value="ECO:0007669"/>
    <property type="project" value="UniProtKB-KW"/>
</dbReference>
<dbReference type="CDD" id="cd02440">
    <property type="entry name" value="AdoMet_MTases"/>
    <property type="match status" value="1"/>
</dbReference>
<dbReference type="FunFam" id="3.40.50.150:FF:000014">
    <property type="entry name" value="Ubiquinone/menaquinone biosynthesis C-methyltransferase UbiE"/>
    <property type="match status" value="1"/>
</dbReference>
<dbReference type="Gene3D" id="3.40.50.150">
    <property type="entry name" value="Vaccinia Virus protein VP39"/>
    <property type="match status" value="1"/>
</dbReference>
<dbReference type="HAMAP" id="MF_01813">
    <property type="entry name" value="MenG_UbiE_methyltr"/>
    <property type="match status" value="1"/>
</dbReference>
<dbReference type="InterPro" id="IPR029063">
    <property type="entry name" value="SAM-dependent_MTases_sf"/>
</dbReference>
<dbReference type="InterPro" id="IPR004033">
    <property type="entry name" value="UbiE/COQ5_MeTrFase"/>
</dbReference>
<dbReference type="InterPro" id="IPR023576">
    <property type="entry name" value="UbiE/COQ5_MeTrFase_CS"/>
</dbReference>
<dbReference type="NCBIfam" id="TIGR01934">
    <property type="entry name" value="MenG_MenH_UbiE"/>
    <property type="match status" value="1"/>
</dbReference>
<dbReference type="NCBIfam" id="NF001240">
    <property type="entry name" value="PRK00216.1-1"/>
    <property type="match status" value="1"/>
</dbReference>
<dbReference type="NCBIfam" id="NF001242">
    <property type="entry name" value="PRK00216.1-3"/>
    <property type="match status" value="1"/>
</dbReference>
<dbReference type="NCBIfam" id="NF001244">
    <property type="entry name" value="PRK00216.1-5"/>
    <property type="match status" value="1"/>
</dbReference>
<dbReference type="PANTHER" id="PTHR43591:SF24">
    <property type="entry name" value="2-METHOXY-6-POLYPRENYL-1,4-BENZOQUINOL METHYLASE, MITOCHONDRIAL"/>
    <property type="match status" value="1"/>
</dbReference>
<dbReference type="PANTHER" id="PTHR43591">
    <property type="entry name" value="METHYLTRANSFERASE"/>
    <property type="match status" value="1"/>
</dbReference>
<dbReference type="Pfam" id="PF01209">
    <property type="entry name" value="Ubie_methyltran"/>
    <property type="match status" value="1"/>
</dbReference>
<dbReference type="SUPFAM" id="SSF53335">
    <property type="entry name" value="S-adenosyl-L-methionine-dependent methyltransferases"/>
    <property type="match status" value="1"/>
</dbReference>
<dbReference type="PROSITE" id="PS51608">
    <property type="entry name" value="SAM_MT_UBIE"/>
    <property type="match status" value="1"/>
</dbReference>
<dbReference type="PROSITE" id="PS01183">
    <property type="entry name" value="UBIE_1"/>
    <property type="match status" value="1"/>
</dbReference>
<dbReference type="PROSITE" id="PS01184">
    <property type="entry name" value="UBIE_2"/>
    <property type="match status" value="1"/>
</dbReference>
<feature type="chain" id="PRO_1000215988" description="Ubiquinone/menaquinone biosynthesis C-methyltransferase UbiE">
    <location>
        <begin position="1"/>
        <end position="251"/>
    </location>
</feature>
<feature type="binding site" evidence="1">
    <location>
        <position position="74"/>
    </location>
    <ligand>
        <name>S-adenosyl-L-methionine</name>
        <dbReference type="ChEBI" id="CHEBI:59789"/>
    </ligand>
</feature>
<feature type="binding site" evidence="1">
    <location>
        <position position="95"/>
    </location>
    <ligand>
        <name>S-adenosyl-L-methionine</name>
        <dbReference type="ChEBI" id="CHEBI:59789"/>
    </ligand>
</feature>
<feature type="binding site" evidence="1">
    <location>
        <begin position="123"/>
        <end position="124"/>
    </location>
    <ligand>
        <name>S-adenosyl-L-methionine</name>
        <dbReference type="ChEBI" id="CHEBI:59789"/>
    </ligand>
</feature>
<feature type="binding site" evidence="1">
    <location>
        <position position="140"/>
    </location>
    <ligand>
        <name>S-adenosyl-L-methionine</name>
        <dbReference type="ChEBI" id="CHEBI:59789"/>
    </ligand>
</feature>
<name>UBIE_PECCP</name>
<organism>
    <name type="scientific">Pectobacterium carotovorum subsp. carotovorum (strain PC1)</name>
    <dbReference type="NCBI Taxonomy" id="561230"/>
    <lineage>
        <taxon>Bacteria</taxon>
        <taxon>Pseudomonadati</taxon>
        <taxon>Pseudomonadota</taxon>
        <taxon>Gammaproteobacteria</taxon>
        <taxon>Enterobacterales</taxon>
        <taxon>Pectobacteriaceae</taxon>
        <taxon>Pectobacterium</taxon>
    </lineage>
</organism>
<gene>
    <name evidence="1" type="primary">ubiE</name>
    <name type="ordered locus">PC1_4056</name>
</gene>
<keyword id="KW-0474">Menaquinone biosynthesis</keyword>
<keyword id="KW-0489">Methyltransferase</keyword>
<keyword id="KW-0949">S-adenosyl-L-methionine</keyword>
<keyword id="KW-0808">Transferase</keyword>
<keyword id="KW-0831">Ubiquinone biosynthesis</keyword>
<reference key="1">
    <citation type="submission" date="2009-07" db="EMBL/GenBank/DDBJ databases">
        <title>Complete sequence of Pectobacterium carotovorum subsp. carotovorum PC1.</title>
        <authorList>
            <consortium name="US DOE Joint Genome Institute"/>
            <person name="Lucas S."/>
            <person name="Copeland A."/>
            <person name="Lapidus A."/>
            <person name="Glavina del Rio T."/>
            <person name="Tice H."/>
            <person name="Bruce D."/>
            <person name="Goodwin L."/>
            <person name="Pitluck S."/>
            <person name="Munk A.C."/>
            <person name="Brettin T."/>
            <person name="Detter J.C."/>
            <person name="Han C."/>
            <person name="Tapia R."/>
            <person name="Larimer F."/>
            <person name="Land M."/>
            <person name="Hauser L."/>
            <person name="Kyrpides N."/>
            <person name="Mikhailova N."/>
            <person name="Balakrishnan V."/>
            <person name="Glasner J."/>
            <person name="Perna N.T."/>
        </authorList>
    </citation>
    <scope>NUCLEOTIDE SEQUENCE [LARGE SCALE GENOMIC DNA]</scope>
    <source>
        <strain>PC1</strain>
    </source>
</reference>
<comment type="function">
    <text evidence="1">Methyltransferase required for the conversion of demethylmenaquinol (DMKH2) to menaquinol (MKH2) and the conversion of 2-polyprenyl-6-methoxy-1,4-benzoquinol (DDMQH2) to 2-polyprenyl-3-methyl-6-methoxy-1,4-benzoquinol (DMQH2).</text>
</comment>
<comment type="catalytic activity">
    <reaction evidence="1">
        <text>a 2-demethylmenaquinol + S-adenosyl-L-methionine = a menaquinol + S-adenosyl-L-homocysteine + H(+)</text>
        <dbReference type="Rhea" id="RHEA:42640"/>
        <dbReference type="Rhea" id="RHEA-COMP:9539"/>
        <dbReference type="Rhea" id="RHEA-COMP:9563"/>
        <dbReference type="ChEBI" id="CHEBI:15378"/>
        <dbReference type="ChEBI" id="CHEBI:18151"/>
        <dbReference type="ChEBI" id="CHEBI:55437"/>
        <dbReference type="ChEBI" id="CHEBI:57856"/>
        <dbReference type="ChEBI" id="CHEBI:59789"/>
        <dbReference type="EC" id="2.1.1.163"/>
    </reaction>
</comment>
<comment type="catalytic activity">
    <reaction evidence="1">
        <text>a 2-methoxy-6-(all-trans-polyprenyl)benzene-1,4-diol + S-adenosyl-L-methionine = a 5-methoxy-2-methyl-3-(all-trans-polyprenyl)benzene-1,4-diol + S-adenosyl-L-homocysteine + H(+)</text>
        <dbReference type="Rhea" id="RHEA:28286"/>
        <dbReference type="Rhea" id="RHEA-COMP:10858"/>
        <dbReference type="Rhea" id="RHEA-COMP:10859"/>
        <dbReference type="ChEBI" id="CHEBI:15378"/>
        <dbReference type="ChEBI" id="CHEBI:57856"/>
        <dbReference type="ChEBI" id="CHEBI:59789"/>
        <dbReference type="ChEBI" id="CHEBI:84166"/>
        <dbReference type="ChEBI" id="CHEBI:84167"/>
        <dbReference type="EC" id="2.1.1.201"/>
    </reaction>
</comment>
<comment type="pathway">
    <text evidence="1">Quinol/quinone metabolism; menaquinone biosynthesis; menaquinol from 1,4-dihydroxy-2-naphthoate: step 2/2.</text>
</comment>
<comment type="pathway">
    <text evidence="1">Cofactor biosynthesis; ubiquinone biosynthesis.</text>
</comment>
<comment type="similarity">
    <text evidence="1">Belongs to the class I-like SAM-binding methyltransferase superfamily. MenG/UbiE family.</text>
</comment>
<protein>
    <recommendedName>
        <fullName evidence="1">Ubiquinone/menaquinone biosynthesis C-methyltransferase UbiE</fullName>
        <ecNumber evidence="1">2.1.1.163</ecNumber>
        <ecNumber evidence="1">2.1.1.201</ecNumber>
    </recommendedName>
    <alternativeName>
        <fullName evidence="1">2-methoxy-6-polyprenyl-1,4-benzoquinol methylase</fullName>
    </alternativeName>
    <alternativeName>
        <fullName evidence="1">Demethylmenaquinone methyltransferase</fullName>
    </alternativeName>
</protein>
<proteinExistence type="inferred from homology"/>
<evidence type="ECO:0000255" key="1">
    <source>
        <dbReference type="HAMAP-Rule" id="MF_01813"/>
    </source>
</evidence>
<sequence length="251" mass="28070">MASEQENTADFGFRTVARDEKEVMVAEVFHSVAAKYDLMNDLMSFGIHRIWKRFTIECSGVRRNQRVLDLAGGTGDLTAKFSRMVGEGGEVILADINASMLKVGREKLRNKGIIDNISYVQANAEALPFPDDFFDCITISFGLRNVTDKNKALRSMYRVLKPGGRLLVLEFSKPIIKQLSTVYDAYSFHILPRIGEAVASDAGSYRYLAESIRMHPDQETLKGMMSDAGFDSVNYFNLTGGIVALHRGFKF</sequence>